<comment type="catalytic activity">
    <reaction evidence="1">
        <text>L-histidinol phosphate + 2-oxoglutarate = 3-(imidazol-4-yl)-2-oxopropyl phosphate + L-glutamate</text>
        <dbReference type="Rhea" id="RHEA:23744"/>
        <dbReference type="ChEBI" id="CHEBI:16810"/>
        <dbReference type="ChEBI" id="CHEBI:29985"/>
        <dbReference type="ChEBI" id="CHEBI:57766"/>
        <dbReference type="ChEBI" id="CHEBI:57980"/>
        <dbReference type="EC" id="2.6.1.9"/>
    </reaction>
</comment>
<comment type="cofactor">
    <cofactor evidence="1">
        <name>pyridoxal 5'-phosphate</name>
        <dbReference type="ChEBI" id="CHEBI:597326"/>
    </cofactor>
</comment>
<comment type="pathway">
    <text evidence="1">Amino-acid biosynthesis; L-histidine biosynthesis; L-histidine from 5-phospho-alpha-D-ribose 1-diphosphate: step 7/9.</text>
</comment>
<comment type="subunit">
    <text evidence="1">Homodimer.</text>
</comment>
<comment type="similarity">
    <text evidence="1">Belongs to the class-II pyridoxal-phosphate-dependent aminotransferase family. Histidinol-phosphate aminotransferase subfamily.</text>
</comment>
<protein>
    <recommendedName>
        <fullName evidence="1">Histidinol-phosphate aminotransferase</fullName>
        <ecNumber evidence="1">2.6.1.9</ecNumber>
    </recommendedName>
    <alternativeName>
        <fullName evidence="1">Imidazole acetol-phosphate transaminase</fullName>
    </alternativeName>
</protein>
<keyword id="KW-0028">Amino-acid biosynthesis</keyword>
<keyword id="KW-0032">Aminotransferase</keyword>
<keyword id="KW-0368">Histidine biosynthesis</keyword>
<keyword id="KW-0663">Pyridoxal phosphate</keyword>
<keyword id="KW-0808">Transferase</keyword>
<reference key="1">
    <citation type="journal article" date="2011" name="Proc. Natl. Acad. Sci. U.S.A.">
        <title>Genomic anatomy of Escherichia coli O157:H7 outbreaks.</title>
        <authorList>
            <person name="Eppinger M."/>
            <person name="Mammel M.K."/>
            <person name="Leclerc J.E."/>
            <person name="Ravel J."/>
            <person name="Cebula T.A."/>
        </authorList>
    </citation>
    <scope>NUCLEOTIDE SEQUENCE [LARGE SCALE GENOMIC DNA]</scope>
    <source>
        <strain>EC4115 / EHEC</strain>
    </source>
</reference>
<evidence type="ECO:0000255" key="1">
    <source>
        <dbReference type="HAMAP-Rule" id="MF_01023"/>
    </source>
</evidence>
<accession>B5YU77</accession>
<feature type="chain" id="PRO_1000135392" description="Histidinol-phosphate aminotransferase">
    <location>
        <begin position="1"/>
        <end position="356"/>
    </location>
</feature>
<feature type="modified residue" description="N6-(pyridoxal phosphate)lysine" evidence="1">
    <location>
        <position position="214"/>
    </location>
</feature>
<dbReference type="EC" id="2.6.1.9" evidence="1"/>
<dbReference type="EMBL" id="CP001164">
    <property type="protein sequence ID" value="ACI35156.1"/>
    <property type="molecule type" value="Genomic_DNA"/>
</dbReference>
<dbReference type="RefSeq" id="WP_000108963.1">
    <property type="nucleotide sequence ID" value="NC_011353.1"/>
</dbReference>
<dbReference type="SMR" id="B5YU77"/>
<dbReference type="KEGG" id="ecf:ECH74115_2954"/>
<dbReference type="HOGENOM" id="CLU_017584_3_1_6"/>
<dbReference type="UniPathway" id="UPA00031">
    <property type="reaction ID" value="UER00012"/>
</dbReference>
<dbReference type="GO" id="GO:0004400">
    <property type="term" value="F:histidinol-phosphate transaminase activity"/>
    <property type="evidence" value="ECO:0007669"/>
    <property type="project" value="UniProtKB-UniRule"/>
</dbReference>
<dbReference type="GO" id="GO:0030170">
    <property type="term" value="F:pyridoxal phosphate binding"/>
    <property type="evidence" value="ECO:0007669"/>
    <property type="project" value="InterPro"/>
</dbReference>
<dbReference type="GO" id="GO:0000105">
    <property type="term" value="P:L-histidine biosynthetic process"/>
    <property type="evidence" value="ECO:0007669"/>
    <property type="project" value="UniProtKB-UniRule"/>
</dbReference>
<dbReference type="CDD" id="cd00609">
    <property type="entry name" value="AAT_like"/>
    <property type="match status" value="1"/>
</dbReference>
<dbReference type="FunFam" id="3.40.640.10:FF:000032">
    <property type="entry name" value="Histidinol-phosphate aminotransferase"/>
    <property type="match status" value="1"/>
</dbReference>
<dbReference type="FunFam" id="3.90.1150.10:FF:000042">
    <property type="entry name" value="Histidinol-phosphate aminotransferase"/>
    <property type="match status" value="1"/>
</dbReference>
<dbReference type="Gene3D" id="3.90.1150.10">
    <property type="entry name" value="Aspartate Aminotransferase, domain 1"/>
    <property type="match status" value="1"/>
</dbReference>
<dbReference type="Gene3D" id="3.40.640.10">
    <property type="entry name" value="Type I PLP-dependent aspartate aminotransferase-like (Major domain)"/>
    <property type="match status" value="1"/>
</dbReference>
<dbReference type="HAMAP" id="MF_01023">
    <property type="entry name" value="HisC_aminotrans_2"/>
    <property type="match status" value="1"/>
</dbReference>
<dbReference type="InterPro" id="IPR001917">
    <property type="entry name" value="Aminotrans_II_pyridoxalP_BS"/>
</dbReference>
<dbReference type="InterPro" id="IPR004839">
    <property type="entry name" value="Aminotransferase_I/II_large"/>
</dbReference>
<dbReference type="InterPro" id="IPR005861">
    <property type="entry name" value="HisP_aminotrans"/>
</dbReference>
<dbReference type="InterPro" id="IPR015424">
    <property type="entry name" value="PyrdxlP-dep_Trfase"/>
</dbReference>
<dbReference type="InterPro" id="IPR015421">
    <property type="entry name" value="PyrdxlP-dep_Trfase_major"/>
</dbReference>
<dbReference type="InterPro" id="IPR015422">
    <property type="entry name" value="PyrdxlP-dep_Trfase_small"/>
</dbReference>
<dbReference type="NCBIfam" id="TIGR01141">
    <property type="entry name" value="hisC"/>
    <property type="match status" value="1"/>
</dbReference>
<dbReference type="PANTHER" id="PTHR42885:SF2">
    <property type="entry name" value="HISTIDINOL-PHOSPHATE AMINOTRANSFERASE"/>
    <property type="match status" value="1"/>
</dbReference>
<dbReference type="PANTHER" id="PTHR42885">
    <property type="entry name" value="HISTIDINOL-PHOSPHATE AMINOTRANSFERASE-RELATED"/>
    <property type="match status" value="1"/>
</dbReference>
<dbReference type="Pfam" id="PF00155">
    <property type="entry name" value="Aminotran_1_2"/>
    <property type="match status" value="1"/>
</dbReference>
<dbReference type="SUPFAM" id="SSF53383">
    <property type="entry name" value="PLP-dependent transferases"/>
    <property type="match status" value="1"/>
</dbReference>
<dbReference type="PROSITE" id="PS00599">
    <property type="entry name" value="AA_TRANSFER_CLASS_2"/>
    <property type="match status" value="1"/>
</dbReference>
<sequence length="356" mass="39388">MSTVTITDLARENVRNLTPYQSARRLGGNGDVWLNANEYPTAVEFQLTQQTLNRYPECQPKAVIENYAQYAGVKPEQVLVSRGADEGIELLIRAFCEPGKDAILYCPPTYGMYSVSAETIGVECRTVPTLENWQLDLQGISDKLDGVKVVYVCSPNNPTGQLINPQDFRTLLELTRGKAIVVADEAYIEFCPQASLAGWLAEYPHLAILRTLSKAFALAGLRCGFTLANEEVINLLMKVIAPYPLSTPVADIAAQALSPQGIIAMRERVAQIIAEREYLIAALKEIPCVEQVFDSETNYILARFKASSAVFKSLWDQGIILRDQNKQPSLSGCLRITVGTREESQRVIDALRAEQV</sequence>
<organism>
    <name type="scientific">Escherichia coli O157:H7 (strain EC4115 / EHEC)</name>
    <dbReference type="NCBI Taxonomy" id="444450"/>
    <lineage>
        <taxon>Bacteria</taxon>
        <taxon>Pseudomonadati</taxon>
        <taxon>Pseudomonadota</taxon>
        <taxon>Gammaproteobacteria</taxon>
        <taxon>Enterobacterales</taxon>
        <taxon>Enterobacteriaceae</taxon>
        <taxon>Escherichia</taxon>
    </lineage>
</organism>
<proteinExistence type="inferred from homology"/>
<name>HIS8_ECO5E</name>
<gene>
    <name evidence="1" type="primary">hisC</name>
    <name type="ordered locus">ECH74115_2954</name>
</gene>